<proteinExistence type="inferred from homology"/>
<protein>
    <recommendedName>
        <fullName evidence="1">Protein Ycf2</fullName>
    </recommendedName>
</protein>
<evidence type="ECO:0000255" key="1">
    <source>
        <dbReference type="HAMAP-Rule" id="MF_01330"/>
    </source>
</evidence>
<organism>
    <name type="scientific">Citrus sinensis</name>
    <name type="common">Sweet orange</name>
    <name type="synonym">Citrus aurantium var. sinensis</name>
    <dbReference type="NCBI Taxonomy" id="2711"/>
    <lineage>
        <taxon>Eukaryota</taxon>
        <taxon>Viridiplantae</taxon>
        <taxon>Streptophyta</taxon>
        <taxon>Embryophyta</taxon>
        <taxon>Tracheophyta</taxon>
        <taxon>Spermatophyta</taxon>
        <taxon>Magnoliopsida</taxon>
        <taxon>eudicotyledons</taxon>
        <taxon>Gunneridae</taxon>
        <taxon>Pentapetalae</taxon>
        <taxon>rosids</taxon>
        <taxon>malvids</taxon>
        <taxon>Sapindales</taxon>
        <taxon>Rutaceae</taxon>
        <taxon>Aurantioideae</taxon>
        <taxon>Citrus</taxon>
    </lineage>
</organism>
<feature type="chain" id="PRO_0000276548" description="Protein Ycf2">
    <location>
        <begin position="1"/>
        <end position="2282"/>
    </location>
</feature>
<feature type="binding site" evidence="1">
    <location>
        <begin position="1637"/>
        <end position="1644"/>
    </location>
    <ligand>
        <name>ATP</name>
        <dbReference type="ChEBI" id="CHEBI:30616"/>
    </ligand>
</feature>
<reference key="1">
    <citation type="journal article" date="2006" name="BMC Plant Biol.">
        <title>The complete chloroplast genome sequence of Citrus sinensis (L.) Osbeck var 'Ridge Pineapple': organization and phylogenetic relationships to other angiosperms.</title>
        <authorList>
            <person name="Bausher M.G."/>
            <person name="Singh N.D."/>
            <person name="Lee S.-B."/>
            <person name="Jansen R.K."/>
            <person name="Daniell H."/>
        </authorList>
    </citation>
    <scope>NUCLEOTIDE SEQUENCE [LARGE SCALE GENOMIC DNA]</scope>
    <source>
        <strain>cv. Osbeck var. Ridge Pineapple</strain>
    </source>
</reference>
<keyword id="KW-0067">ATP-binding</keyword>
<keyword id="KW-0150">Chloroplast</keyword>
<keyword id="KW-0547">Nucleotide-binding</keyword>
<keyword id="KW-0934">Plastid</keyword>
<accession>Q09MB4</accession>
<dbReference type="EMBL" id="DQ864733">
    <property type="protein sequence ID" value="ABI49062.1"/>
    <property type="molecule type" value="Genomic_DNA"/>
</dbReference>
<dbReference type="EMBL" id="DQ864733">
    <property type="protein sequence ID" value="ABI49084.1"/>
    <property type="molecule type" value="Genomic_DNA"/>
</dbReference>
<dbReference type="KEGG" id="cit:4271165"/>
<dbReference type="KEGG" id="cit:4271167"/>
<dbReference type="OrthoDB" id="143476at71240"/>
<dbReference type="GO" id="GO:0009570">
    <property type="term" value="C:chloroplast stroma"/>
    <property type="evidence" value="ECO:0007669"/>
    <property type="project" value="UniProtKB-SubCell"/>
</dbReference>
<dbReference type="GO" id="GO:0005524">
    <property type="term" value="F:ATP binding"/>
    <property type="evidence" value="ECO:0007669"/>
    <property type="project" value="UniProtKB-KW"/>
</dbReference>
<dbReference type="GO" id="GO:0016887">
    <property type="term" value="F:ATP hydrolysis activity"/>
    <property type="evidence" value="ECO:0007669"/>
    <property type="project" value="InterPro"/>
</dbReference>
<dbReference type="CDD" id="cd19505">
    <property type="entry name" value="RecA-like_Ycf2"/>
    <property type="match status" value="1"/>
</dbReference>
<dbReference type="Gene3D" id="3.40.50.300">
    <property type="entry name" value="P-loop containing nucleotide triphosphate hydrolases"/>
    <property type="match status" value="1"/>
</dbReference>
<dbReference type="HAMAP" id="MF_01330">
    <property type="entry name" value="Ycf2"/>
    <property type="match status" value="1"/>
</dbReference>
<dbReference type="InterPro" id="IPR003593">
    <property type="entry name" value="AAA+_ATPase"/>
</dbReference>
<dbReference type="InterPro" id="IPR003959">
    <property type="entry name" value="ATPase_AAA_core"/>
</dbReference>
<dbReference type="InterPro" id="IPR027417">
    <property type="entry name" value="P-loop_NTPase"/>
</dbReference>
<dbReference type="InterPro" id="IPR008543">
    <property type="entry name" value="Uncharacterised_Ycf2"/>
</dbReference>
<dbReference type="InterPro" id="IPR056777">
    <property type="entry name" value="Ycf2_N"/>
</dbReference>
<dbReference type="PANTHER" id="PTHR33078:SF92">
    <property type="entry name" value="PROTEIN YCF2"/>
    <property type="match status" value="1"/>
</dbReference>
<dbReference type="PANTHER" id="PTHR33078">
    <property type="entry name" value="PROTEIN YCF2-RELATED"/>
    <property type="match status" value="1"/>
</dbReference>
<dbReference type="Pfam" id="PF00004">
    <property type="entry name" value="AAA"/>
    <property type="match status" value="1"/>
</dbReference>
<dbReference type="Pfam" id="PF05695">
    <property type="entry name" value="Ycf2"/>
    <property type="match status" value="1"/>
</dbReference>
<dbReference type="SMART" id="SM00382">
    <property type="entry name" value="AAA"/>
    <property type="match status" value="1"/>
</dbReference>
<dbReference type="SUPFAM" id="SSF52540">
    <property type="entry name" value="P-loop containing nucleoside triphosphate hydrolases"/>
    <property type="match status" value="1"/>
</dbReference>
<sequence length="2282" mass="267991">MKGHQFKSWIFELREILREIKNSHYFLDSWTQFNSVGSFIHIFFHQERFIKLLDPRIWSILLSRNSQGSTSNRYFTIKCVVLFVVAILIYRINNRNMVERKNLYLTGLLPIPMNSIGPRTDTLEESFGSSNINRLIVSLLYLPKGKKISESFFLDPKESTWVLPITKRCIMPESNWGSRWWRNWLGKKRDSSCKISNETVAGIEISFKEKDLKYLEFLFVYYMDDPIRKDHDWELFDRLSPSKRRNIINLNSGHLFEILVKDWICYLMFAFREKIPIEVGGFLKQQGAGSTIQSNDIERFSHLFLRNKWAISLQNCAQFHMWQFRQDLFVSWGKNPHESDFLRNIARENWIWLDNVWLVNKDRFFTKVRNVSSNIQYDSTRSSFVQVTDSSQLKGSSDQSRDHFDSISNEDSEYHTLINQREIQQLKERSILWDPSFLQAERREIESDRFPKCLSGYSSMSRLFTERERQMNKHLLPEEIEEFLGNPARSIRSFFSDRWSELHLGSNPTERSTRDQKLLKKEEDVSFVPSRRSENKEIVNIFKIITYLQNTVSIHPISSDPGCDMVPKDELDMDSSNKISFLNKNPFFDLFHLFHDRNRGGSTLHHDFESEERFQEMADLFTLSITEPDLVYHKGFAFSIFSYGLEQKQFLNEVFNSRNESKKKSLLVLPPIFYEENESFYRRIRKKWVRISCGNDLEDPKPKIVVFASNNIMEAVNQSRLIRNRIQIQYSTYGYIRNVLNRFFLMNRSDRNFEYGIHRDQIGNDTLNHRTIMKYTINQHLSNLKKSQKKWFAPLILISRTERFMNRDPNAYRYKWSNGSKNFQEHLKHFVSEQKSRFQVVFDRLRINQYSIDWSEVIDKKDLSKPLPFFLSKFLFFLSNSLPFFFVSFGNIPIHRSEIHIYELKGPNDQLCNQLLESIGLQIVHLKKLKPFLLDDHNTSQKSKFLINGGRISPFLFNKIPKWMIDSFHTRKNRRKSFDNTDSYFSMISHDQDNWLNPVKPFHRSSLISSFYKANRLRFLNNPHRFRFYCNKRFTFYVEKVRINNYDFTYGQFLNILFIRNKIFSLCGGKKKHAFLERDTISPIESQVSNIFIPNDFPQSGDERYNLYKFFPFPIRSDLLVRRAIYSIAAISGTPLTEGQIVNFERTYCQPLSDMNRSDSDEKNLHQYLNFNSNMGLIHTPCSEKYLPSEKRKRKKRSLCLKKCVEKGQMSRTFQRDSAFSTLSKWNRFQTYMPWFLTSTGYKYLNLIFLDTFSDLLPVLSSSQKFVSIFHDIMHGSDRAWRILQKKWCLPQWNLISEISSKCFHNLLLSEEMIHRNNESPLISTHLRSPNAREFLYSILFLLLVAGYLVHTHLLFVSRAYSELETEFERVKSLMIPPYMIELRKLLDRYPTSELNSFWLKNLFLVALEQLGDSLEEIRGSAFGGNMLWGGGPADGVKSIRSKTKDLNINLVDITDLISIIPNPINRITFSRNTRHLSHTSKEIYSLIRKRKKGNGDWIDDKIESWVANSDSIDDKEREFLVQFSTLTLTTEKRIDQILSSLTHSDHLSKNDSGYQMIEQPGTIYLRYLVDIHKKHFMNYEFNTYCLAERRIFLAHYQTITYSQTSCGANSFHFPSHGKPFSLRLALSPSRGILVIGSIGTGRSYLVKYLAANSYVPFITVFLNKFLDNKPKGFLIDDIDDASDDIDASDDIDRDLDTELELLTMMNALTIDMMSEIGRFYITLQFELAKAMSPCIIWIPNIHDLDVNESNYLSLGLLVNYLSRDCERCSTRNILVIASTHIPQKVDPALIAPNKLNTCIKIRRLLIPQQRKHFFTLSYTRGFHLEKKMFHTNGFGSITMGSNARDLVALTNEALSISITQKKSIIDTNTIRSALHRQTWDLRSQVRSVQDHGILFYQIGRAVAQNVLLSNCPIDPISIYMKKKSCNEGDSYLYKWYFELGTSMKKLTILLYLLSCSAGSVAQDLWSLPGPDEKNGITSSGLVENDSDLVHGLLEVEGALVGSSRTEKDCSRFDNDRVTLLLRPEPRNPLDMMQKGSCSIVDQRFLYEKYESEFEEGEGEGVLDPQQIEEDLFNHIVWAPRIWRPWGFLFDCIERPNELGFPYRAGSFRGKRIIYDEKDELQENDSEFLQSRTMQYQTRDRSSNEQGFFRISQFIWEPADPLFFLFKDQPLVSVFSHREFFADEEMSKGLLTSQPDPPTSIYKRWFIKNTQEKHFELLIHRQRWLRTNSSLSNGFFRSNTPSESYQYLSNLFLSNGTLLDQMTKTLLRKRWLFPDEMKIGFM</sequence>
<geneLocation type="chloroplast"/>
<name>YCF2_CITSI</name>
<gene>
    <name evidence="1" type="primary">ycf2-A</name>
</gene>
<gene>
    <name evidence="1" type="primary">ycf2-B</name>
</gene>
<comment type="function">
    <text>Probable ATPase of unknown function. Its presence in a non-photosynthetic plant (Epifagus virginiana) and experiments in tobacco indicate that it has an essential function which is probably not related to photosynthesis.</text>
</comment>
<comment type="subcellular location">
    <subcellularLocation>
        <location evidence="1">Plastid</location>
        <location evidence="1">Chloroplast stroma</location>
    </subcellularLocation>
</comment>
<comment type="similarity">
    <text evidence="1">Belongs to the Ycf2 family.</text>
</comment>